<name>RL29_ROSCS</name>
<protein>
    <recommendedName>
        <fullName evidence="1">Large ribosomal subunit protein uL29</fullName>
    </recommendedName>
    <alternativeName>
        <fullName evidence="2">50S ribosomal protein L29</fullName>
    </alternativeName>
</protein>
<keyword id="KW-1185">Reference proteome</keyword>
<keyword id="KW-0687">Ribonucleoprotein</keyword>
<keyword id="KW-0689">Ribosomal protein</keyword>
<accession>A7NR55</accession>
<sequence length="66" mass="7892">MKADELRKLDNEQLRAKLKDCYEELFNLRFQQVMGKLTATGRPRMVRRDIARIKTILRERELGIES</sequence>
<organism>
    <name type="scientific">Roseiflexus castenholzii (strain DSM 13941 / HLO8)</name>
    <dbReference type="NCBI Taxonomy" id="383372"/>
    <lineage>
        <taxon>Bacteria</taxon>
        <taxon>Bacillati</taxon>
        <taxon>Chloroflexota</taxon>
        <taxon>Chloroflexia</taxon>
        <taxon>Chloroflexales</taxon>
        <taxon>Roseiflexineae</taxon>
        <taxon>Roseiflexaceae</taxon>
        <taxon>Roseiflexus</taxon>
    </lineage>
</organism>
<proteinExistence type="inferred from homology"/>
<gene>
    <name evidence="1" type="primary">rpmC</name>
    <name type="ordered locus">Rcas_4018</name>
</gene>
<evidence type="ECO:0000255" key="1">
    <source>
        <dbReference type="HAMAP-Rule" id="MF_00374"/>
    </source>
</evidence>
<evidence type="ECO:0000305" key="2"/>
<comment type="similarity">
    <text evidence="1">Belongs to the universal ribosomal protein uL29 family.</text>
</comment>
<feature type="chain" id="PRO_1000079899" description="Large ribosomal subunit protein uL29">
    <location>
        <begin position="1"/>
        <end position="66"/>
    </location>
</feature>
<reference key="1">
    <citation type="submission" date="2007-08" db="EMBL/GenBank/DDBJ databases">
        <title>Complete sequence of Roseiflexus castenholzii DSM 13941.</title>
        <authorList>
            <consortium name="US DOE Joint Genome Institute"/>
            <person name="Copeland A."/>
            <person name="Lucas S."/>
            <person name="Lapidus A."/>
            <person name="Barry K."/>
            <person name="Glavina del Rio T."/>
            <person name="Dalin E."/>
            <person name="Tice H."/>
            <person name="Pitluck S."/>
            <person name="Thompson L.S."/>
            <person name="Brettin T."/>
            <person name="Bruce D."/>
            <person name="Detter J.C."/>
            <person name="Han C."/>
            <person name="Tapia R."/>
            <person name="Schmutz J."/>
            <person name="Larimer F."/>
            <person name="Land M."/>
            <person name="Hauser L."/>
            <person name="Kyrpides N."/>
            <person name="Mikhailova N."/>
            <person name="Bryant D.A."/>
            <person name="Hanada S."/>
            <person name="Tsukatani Y."/>
            <person name="Richardson P."/>
        </authorList>
    </citation>
    <scope>NUCLEOTIDE SEQUENCE [LARGE SCALE GENOMIC DNA]</scope>
    <source>
        <strain>DSM 13941 / HLO8</strain>
    </source>
</reference>
<dbReference type="EMBL" id="CP000804">
    <property type="protein sequence ID" value="ABU60051.1"/>
    <property type="molecule type" value="Genomic_DNA"/>
</dbReference>
<dbReference type="RefSeq" id="WP_012122473.1">
    <property type="nucleotide sequence ID" value="NC_009767.1"/>
</dbReference>
<dbReference type="SMR" id="A7NR55"/>
<dbReference type="STRING" id="383372.Rcas_4018"/>
<dbReference type="KEGG" id="rca:Rcas_4018"/>
<dbReference type="eggNOG" id="COG0255">
    <property type="taxonomic scope" value="Bacteria"/>
</dbReference>
<dbReference type="HOGENOM" id="CLU_158491_5_2_0"/>
<dbReference type="OrthoDB" id="9815192at2"/>
<dbReference type="Proteomes" id="UP000000263">
    <property type="component" value="Chromosome"/>
</dbReference>
<dbReference type="GO" id="GO:0022625">
    <property type="term" value="C:cytosolic large ribosomal subunit"/>
    <property type="evidence" value="ECO:0007669"/>
    <property type="project" value="TreeGrafter"/>
</dbReference>
<dbReference type="GO" id="GO:0003735">
    <property type="term" value="F:structural constituent of ribosome"/>
    <property type="evidence" value="ECO:0007669"/>
    <property type="project" value="InterPro"/>
</dbReference>
<dbReference type="GO" id="GO:0006412">
    <property type="term" value="P:translation"/>
    <property type="evidence" value="ECO:0007669"/>
    <property type="project" value="UniProtKB-UniRule"/>
</dbReference>
<dbReference type="CDD" id="cd00427">
    <property type="entry name" value="Ribosomal_L29_HIP"/>
    <property type="match status" value="1"/>
</dbReference>
<dbReference type="FunFam" id="1.10.287.310:FF:000001">
    <property type="entry name" value="50S ribosomal protein L29"/>
    <property type="match status" value="1"/>
</dbReference>
<dbReference type="Gene3D" id="1.10.287.310">
    <property type="match status" value="1"/>
</dbReference>
<dbReference type="HAMAP" id="MF_00374">
    <property type="entry name" value="Ribosomal_uL29"/>
    <property type="match status" value="1"/>
</dbReference>
<dbReference type="InterPro" id="IPR050063">
    <property type="entry name" value="Ribosomal_protein_uL29"/>
</dbReference>
<dbReference type="InterPro" id="IPR001854">
    <property type="entry name" value="Ribosomal_uL29"/>
</dbReference>
<dbReference type="InterPro" id="IPR036049">
    <property type="entry name" value="Ribosomal_uL29_sf"/>
</dbReference>
<dbReference type="NCBIfam" id="TIGR00012">
    <property type="entry name" value="L29"/>
    <property type="match status" value="1"/>
</dbReference>
<dbReference type="PANTHER" id="PTHR10916">
    <property type="entry name" value="60S RIBOSOMAL PROTEIN L35/50S RIBOSOMAL PROTEIN L29"/>
    <property type="match status" value="1"/>
</dbReference>
<dbReference type="PANTHER" id="PTHR10916:SF0">
    <property type="entry name" value="LARGE RIBOSOMAL SUBUNIT PROTEIN UL29C"/>
    <property type="match status" value="1"/>
</dbReference>
<dbReference type="Pfam" id="PF00831">
    <property type="entry name" value="Ribosomal_L29"/>
    <property type="match status" value="1"/>
</dbReference>
<dbReference type="SUPFAM" id="SSF46561">
    <property type="entry name" value="Ribosomal protein L29 (L29p)"/>
    <property type="match status" value="1"/>
</dbReference>